<sequence>MGAAASIQTTVNTLSERISSKLEQEANASAQTKCDIEIGNFYIRQNHGCNLTVKNMCSADADAQLDAVLSAATETYSGLTPEQKAYVPAMFTAALNIQTSVNTVVRDFENYVKQTCNSSAVVDNKLKIQNVIIDECYGAPGSPTNLEFINTGSSKGNCAIKALMQLTTKATTQIAPRQVAGTGVQFYMIVIGVIILAALFMYYAKRMLFTSTNDKIKLILANKENVHWTTYMDTFFRTSPMVIATTDMQN</sequence>
<feature type="initiator methionine" description="Removed; by host" evidence="1">
    <location>
        <position position="1"/>
    </location>
</feature>
<feature type="chain" id="PRO_0000099611" description="Entry-fusion complex associated protein OPG095">
    <location>
        <begin position="2"/>
        <end position="250"/>
    </location>
</feature>
<feature type="topological domain" description="Virion surface" evidence="2">
    <location>
        <begin position="2"/>
        <end position="183"/>
    </location>
</feature>
<feature type="transmembrane region" description="Helical" evidence="2">
    <location>
        <begin position="184"/>
        <end position="204"/>
    </location>
</feature>
<feature type="topological domain" description="Intravirion" evidence="2">
    <location>
        <begin position="205"/>
        <end position="250"/>
    </location>
</feature>
<feature type="region of interest" description="Targeting to MV membrane" evidence="1">
    <location>
        <begin position="2"/>
        <end position="12"/>
    </location>
</feature>
<feature type="lipid moiety-binding region" description="N-myristoyl glycine; by host" evidence="1">
    <location>
        <position position="2"/>
    </location>
</feature>
<feature type="disulfide bond" description="by OPG088" evidence="1">
    <location>
        <begin position="34"/>
        <end position="57"/>
    </location>
</feature>
<feature type="disulfide bond" description="by OPG088" evidence="1">
    <location>
        <begin position="49"/>
        <end position="136"/>
    </location>
</feature>
<feature type="disulfide bond" description="by OPG088" evidence="1">
    <location>
        <begin position="116"/>
        <end position="158"/>
    </location>
</feature>
<accession>Q76RD2</accession>
<dbReference type="EMBL" id="U94848">
    <property type="protein sequence ID" value="AAB96498.1"/>
    <property type="molecule type" value="Genomic_DNA"/>
</dbReference>
<dbReference type="EMBL" id="AY603355">
    <property type="protein sequence ID" value="AAT10478.1"/>
    <property type="molecule type" value="Genomic_DNA"/>
</dbReference>
<dbReference type="SMR" id="Q76RD2"/>
<dbReference type="Proteomes" id="UP000159908">
    <property type="component" value="Segment"/>
</dbReference>
<dbReference type="Proteomes" id="UP000172909">
    <property type="component" value="Segment"/>
</dbReference>
<dbReference type="GO" id="GO:0016020">
    <property type="term" value="C:membrane"/>
    <property type="evidence" value="ECO:0007669"/>
    <property type="project" value="UniProtKB-KW"/>
</dbReference>
<dbReference type="GO" id="GO:0019031">
    <property type="term" value="C:viral envelope"/>
    <property type="evidence" value="ECO:0007669"/>
    <property type="project" value="UniProtKB-KW"/>
</dbReference>
<dbReference type="GO" id="GO:0055036">
    <property type="term" value="C:virion membrane"/>
    <property type="evidence" value="ECO:0007669"/>
    <property type="project" value="UniProtKB-SubCell"/>
</dbReference>
<dbReference type="GO" id="GO:0046718">
    <property type="term" value="P:symbiont entry into host cell"/>
    <property type="evidence" value="ECO:0007669"/>
    <property type="project" value="UniProtKB-KW"/>
</dbReference>
<dbReference type="GO" id="GO:0019062">
    <property type="term" value="P:virion attachment to host cell"/>
    <property type="evidence" value="ECO:0007669"/>
    <property type="project" value="UniProtKB-KW"/>
</dbReference>
<dbReference type="InterPro" id="IPR003472">
    <property type="entry name" value="Virion_mem_poxvirus_L1"/>
</dbReference>
<dbReference type="Pfam" id="PF02442">
    <property type="entry name" value="L1R_F9L"/>
    <property type="match status" value="1"/>
</dbReference>
<proteinExistence type="inferred from homology"/>
<keyword id="KW-1015">Disulfide bond</keyword>
<keyword id="KW-0945">Host-virus interaction</keyword>
<keyword id="KW-0426">Late protein</keyword>
<keyword id="KW-0449">Lipoprotein</keyword>
<keyword id="KW-0472">Membrane</keyword>
<keyword id="KW-0519">Myristate</keyword>
<keyword id="KW-0812">Transmembrane</keyword>
<keyword id="KW-1133">Transmembrane helix</keyword>
<keyword id="KW-1161">Viral attachment to host cell</keyword>
<keyword id="KW-0261">Viral envelope protein</keyword>
<keyword id="KW-1162">Viral penetration into host cytoplasm</keyword>
<keyword id="KW-0946">Virion</keyword>
<keyword id="KW-1160">Virus entry into host cell</keyword>
<comment type="function">
    <text evidence="1">Component of the entry fusion complex (EFC), which consists of 11 proteins. During cell infection, this complex mediates entry of the virion core into the host cytoplasm by a two-step mechanism consisting of lipid mixing of the viral and cellular membranes and subsequent pore formation.</text>
</comment>
<comment type="subunit">
    <text evidence="1">Component of the entry fusion complex (EFC) composed of OPG053, OPG076, OPG086, OPG094, OPG095, OPG099, OPG107, OPG143, OPG104, OPG147 and OPG155. Except for OPG095 and OPG053, each of the EFC proteins is required for assembly or stability of the complex.</text>
</comment>
<comment type="subcellular location">
    <subcellularLocation>
        <location evidence="1">Virion membrane</location>
        <topology evidence="1">Single-pass membrane protein</topology>
    </subcellularLocation>
    <text evidence="1">Localizes to the membrane surrounding the core of mature virus particles (MV).</text>
</comment>
<comment type="induction">
    <text evidence="1">Expressed in the late phase of the viral replicative cycle.</text>
</comment>
<comment type="PTM">
    <text evidence="1">Myristoylated.</text>
</comment>
<comment type="PTM">
    <text evidence="1">Disulfid bonds are oxidized in the cytoplasm by OPG088 protein.</text>
</comment>
<comment type="PTM">
    <text evidence="1">Unglycosylated because produced in viral factories instead of the classic ER -Golgi route.</text>
</comment>
<comment type="similarity">
    <text evidence="3">Belongs to the orthopoxvirus OPG095 family.</text>
</comment>
<reference key="1">
    <citation type="journal article" date="1998" name="Virology">
        <title>The complete genomic sequence of the modified vaccinia Ankara strain: comparison with other orthopoxviruses.</title>
        <authorList>
            <person name="Antoine G."/>
            <person name="Scheiflinger F."/>
            <person name="Dorner F."/>
            <person name="Falkner F.G."/>
        </authorList>
    </citation>
    <scope>NUCLEOTIDE SEQUENCE [LARGE SCALE GENOMIC DNA]</scope>
</reference>
<reference key="2">
    <citation type="submission" date="2004-04" db="EMBL/GenBank/DDBJ databases">
        <authorList>
            <person name="Esposito J.J."/>
            <person name="Frace M."/>
            <person name="Sammons S.A."/>
            <person name="Olsen-Rasmussen M.S."/>
            <person name="Osborne J."/>
            <person name="Khristova M."/>
            <person name="Wohlhueter R.M."/>
        </authorList>
    </citation>
    <scope>NUCLEOTIDE SEQUENCE [LARGE SCALE GENOMIC DNA]</scope>
    <source>
        <strain>Isolate Acambis 3000</strain>
    </source>
</reference>
<evidence type="ECO:0000250" key="1">
    <source>
        <dbReference type="UniProtKB" id="P07612"/>
    </source>
</evidence>
<evidence type="ECO:0000255" key="2"/>
<evidence type="ECO:0000305" key="3"/>
<gene>
    <name type="primary">OPG099</name>
    <name type="ordered locus">MVA080R</name>
    <name type="ordered locus">ACAM3000_MVA_080</name>
    <name type="ORF">L1R</name>
</gene>
<organismHost>
    <name type="scientific">Homo sapiens</name>
    <name type="common">Human</name>
    <dbReference type="NCBI Taxonomy" id="9606"/>
</organismHost>
<name>PG095_VACCA</name>
<protein>
    <recommendedName>
        <fullName>Entry-fusion complex associated protein OPG095</fullName>
    </recommendedName>
    <alternativeName>
        <fullName>EFC-associated protein OPG095</fullName>
    </alternativeName>
    <alternativeName>
        <fullName>Protein L1</fullName>
    </alternativeName>
    <alternativeName>
        <fullName>Virion membrane protein M25</fullName>
    </alternativeName>
</protein>
<organism>
    <name type="scientific">Vaccinia virus (strain Ankara)</name>
    <name type="common">VACV</name>
    <dbReference type="NCBI Taxonomy" id="126794"/>
    <lineage>
        <taxon>Viruses</taxon>
        <taxon>Varidnaviria</taxon>
        <taxon>Bamfordvirae</taxon>
        <taxon>Nucleocytoviricota</taxon>
        <taxon>Pokkesviricetes</taxon>
        <taxon>Chitovirales</taxon>
        <taxon>Poxviridae</taxon>
        <taxon>Chordopoxvirinae</taxon>
        <taxon>Orthopoxvirus</taxon>
        <taxon>Vaccinia virus</taxon>
    </lineage>
</organism>